<proteinExistence type="inferred from homology"/>
<sequence>MIQGTTSDAGKSTLVAGLCRIAHRAGVRVAPFKPQNMALNSAVTADGGEIGRAQALQAQAAGLAPTVDMNPVLLKPNSDTGAQVIIHGRPRGDLNARAYHDYKPTAMAAVLASHGRLRAQYDLVLVEGAGSPAEVNLRARDIANMGFAEAVDCPVVLVADIDRGGVFAHLVGTLACLSESERARVTGFVINRFRGDLSLLTPGLDWLTAQTGKPVFGVLPYLQGLHLDAEDAVQTAQSAASGEVLRVVIPVLPRISNHTDFDALRAHPQVDVRMVGPGRPIPPADLVILPGSKSVQADLAWLRAHGWDAAIARHLRYGGKLIGICGGMQMLGRRLRDPLGLEGRPGSLDGLGYLDFETTLAPAKQLRQVRGTLADGGAALAGYEIHMGVTEGPALARPAVRLDDGRTDGAVSADGQILATYLHGLFDAPEACRALLAWAGVREARAQDYAALREASLERLADTLRAHLDLPALFASLAVRG</sequence>
<evidence type="ECO:0000255" key="1">
    <source>
        <dbReference type="HAMAP-Rule" id="MF_00028"/>
    </source>
</evidence>
<evidence type="ECO:0000305" key="2"/>
<protein>
    <recommendedName>
        <fullName evidence="1">Cobyric acid synthase</fullName>
    </recommendedName>
</protein>
<dbReference type="EMBL" id="AL646052">
    <property type="protein sequence ID" value="CAD16097.1"/>
    <property type="status" value="ALT_INIT"/>
    <property type="molecule type" value="Genomic_DNA"/>
</dbReference>
<dbReference type="SMR" id="Q8XWT0"/>
<dbReference type="STRING" id="267608.RSc2390"/>
<dbReference type="EnsemblBacteria" id="CAD16097">
    <property type="protein sequence ID" value="CAD16097"/>
    <property type="gene ID" value="RSc2390"/>
</dbReference>
<dbReference type="KEGG" id="rso:RSc2390"/>
<dbReference type="eggNOG" id="COG1492">
    <property type="taxonomic scope" value="Bacteria"/>
</dbReference>
<dbReference type="HOGENOM" id="CLU_019250_2_2_4"/>
<dbReference type="UniPathway" id="UPA00148"/>
<dbReference type="Proteomes" id="UP000001436">
    <property type="component" value="Chromosome"/>
</dbReference>
<dbReference type="GO" id="GO:0015420">
    <property type="term" value="F:ABC-type vitamin B12 transporter activity"/>
    <property type="evidence" value="ECO:0007669"/>
    <property type="project" value="UniProtKB-UniRule"/>
</dbReference>
<dbReference type="GO" id="GO:0003824">
    <property type="term" value="F:catalytic activity"/>
    <property type="evidence" value="ECO:0007669"/>
    <property type="project" value="InterPro"/>
</dbReference>
<dbReference type="GO" id="GO:0009236">
    <property type="term" value="P:cobalamin biosynthetic process"/>
    <property type="evidence" value="ECO:0007669"/>
    <property type="project" value="UniProtKB-UniRule"/>
</dbReference>
<dbReference type="CDD" id="cd05389">
    <property type="entry name" value="CobQ_N"/>
    <property type="match status" value="1"/>
</dbReference>
<dbReference type="CDD" id="cd01750">
    <property type="entry name" value="GATase1_CobQ"/>
    <property type="match status" value="1"/>
</dbReference>
<dbReference type="Gene3D" id="3.40.50.880">
    <property type="match status" value="1"/>
</dbReference>
<dbReference type="Gene3D" id="3.40.50.300">
    <property type="entry name" value="P-loop containing nucleotide triphosphate hydrolases"/>
    <property type="match status" value="1"/>
</dbReference>
<dbReference type="HAMAP" id="MF_00028">
    <property type="entry name" value="CobQ"/>
    <property type="match status" value="1"/>
</dbReference>
<dbReference type="InterPro" id="IPR029062">
    <property type="entry name" value="Class_I_gatase-like"/>
</dbReference>
<dbReference type="InterPro" id="IPR002586">
    <property type="entry name" value="CobQ/CobB/MinD/ParA_Nub-bd_dom"/>
</dbReference>
<dbReference type="InterPro" id="IPR033949">
    <property type="entry name" value="CobQ_GATase1"/>
</dbReference>
<dbReference type="InterPro" id="IPR047045">
    <property type="entry name" value="CobQ_N"/>
</dbReference>
<dbReference type="InterPro" id="IPR004459">
    <property type="entry name" value="CobQ_synth"/>
</dbReference>
<dbReference type="InterPro" id="IPR011698">
    <property type="entry name" value="GATase_3"/>
</dbReference>
<dbReference type="InterPro" id="IPR027417">
    <property type="entry name" value="P-loop_NTPase"/>
</dbReference>
<dbReference type="NCBIfam" id="TIGR00313">
    <property type="entry name" value="cobQ"/>
    <property type="match status" value="1"/>
</dbReference>
<dbReference type="NCBIfam" id="NF001989">
    <property type="entry name" value="PRK00784.1"/>
    <property type="match status" value="1"/>
</dbReference>
<dbReference type="PANTHER" id="PTHR21343:SF1">
    <property type="entry name" value="COBYRIC ACID SYNTHASE"/>
    <property type="match status" value="1"/>
</dbReference>
<dbReference type="PANTHER" id="PTHR21343">
    <property type="entry name" value="DETHIOBIOTIN SYNTHETASE"/>
    <property type="match status" value="1"/>
</dbReference>
<dbReference type="Pfam" id="PF01656">
    <property type="entry name" value="CbiA"/>
    <property type="match status" value="1"/>
</dbReference>
<dbReference type="Pfam" id="PF07685">
    <property type="entry name" value="GATase_3"/>
    <property type="match status" value="1"/>
</dbReference>
<dbReference type="SUPFAM" id="SSF52317">
    <property type="entry name" value="Class I glutamine amidotransferase-like"/>
    <property type="match status" value="1"/>
</dbReference>
<dbReference type="SUPFAM" id="SSF52540">
    <property type="entry name" value="P-loop containing nucleoside triphosphate hydrolases"/>
    <property type="match status" value="1"/>
</dbReference>
<dbReference type="PROSITE" id="PS51274">
    <property type="entry name" value="GATASE_COBBQ"/>
    <property type="match status" value="1"/>
</dbReference>
<gene>
    <name evidence="1" type="primary">cobQ</name>
    <name type="ordered locus">RSc2390</name>
    <name type="ORF">RS02759</name>
</gene>
<name>COBQ_RALN1</name>
<organism>
    <name type="scientific">Ralstonia nicotianae (strain ATCC BAA-1114 / GMI1000)</name>
    <name type="common">Ralstonia solanacearum</name>
    <dbReference type="NCBI Taxonomy" id="267608"/>
    <lineage>
        <taxon>Bacteria</taxon>
        <taxon>Pseudomonadati</taxon>
        <taxon>Pseudomonadota</taxon>
        <taxon>Betaproteobacteria</taxon>
        <taxon>Burkholderiales</taxon>
        <taxon>Burkholderiaceae</taxon>
        <taxon>Ralstonia</taxon>
        <taxon>Ralstonia solanacearum species complex</taxon>
    </lineage>
</organism>
<comment type="function">
    <text evidence="1">Catalyzes amidations at positions B, D, E, and G on adenosylcobyrinic A,C-diamide. NH(2) groups are provided by glutamine, and one molecule of ATP is hydrogenolyzed for each amidation.</text>
</comment>
<comment type="pathway">
    <text evidence="1">Cofactor biosynthesis; adenosylcobalamin biosynthesis.</text>
</comment>
<comment type="similarity">
    <text evidence="1">Belongs to the CobB/CobQ family. CobQ subfamily.</text>
</comment>
<comment type="sequence caution" evidence="2">
    <conflict type="erroneous initiation">
        <sequence resource="EMBL-CDS" id="CAD16097"/>
    </conflict>
</comment>
<reference key="1">
    <citation type="journal article" date="2002" name="Nature">
        <title>Genome sequence of the plant pathogen Ralstonia solanacearum.</title>
        <authorList>
            <person name="Salanoubat M."/>
            <person name="Genin S."/>
            <person name="Artiguenave F."/>
            <person name="Gouzy J."/>
            <person name="Mangenot S."/>
            <person name="Arlat M."/>
            <person name="Billault A."/>
            <person name="Brottier P."/>
            <person name="Camus J.-C."/>
            <person name="Cattolico L."/>
            <person name="Chandler M."/>
            <person name="Choisne N."/>
            <person name="Claudel-Renard C."/>
            <person name="Cunnac S."/>
            <person name="Demange N."/>
            <person name="Gaspin C."/>
            <person name="Lavie M."/>
            <person name="Moisan A."/>
            <person name="Robert C."/>
            <person name="Saurin W."/>
            <person name="Schiex T."/>
            <person name="Siguier P."/>
            <person name="Thebault P."/>
            <person name="Whalen M."/>
            <person name="Wincker P."/>
            <person name="Levy M."/>
            <person name="Weissenbach J."/>
            <person name="Boucher C.A."/>
        </authorList>
    </citation>
    <scope>NUCLEOTIDE SEQUENCE [LARGE SCALE GENOMIC DNA]</scope>
    <source>
        <strain>ATCC BAA-1114 / GMI1000</strain>
    </source>
</reference>
<keyword id="KW-0169">Cobalamin biosynthesis</keyword>
<keyword id="KW-0315">Glutamine amidotransferase</keyword>
<keyword id="KW-1185">Reference proteome</keyword>
<feature type="chain" id="PRO_0000141324" description="Cobyric acid synthase">
    <location>
        <begin position="1"/>
        <end position="481"/>
    </location>
</feature>
<feature type="domain" description="GATase cobBQ-type" evidence="1">
    <location>
        <begin position="244"/>
        <end position="431"/>
    </location>
</feature>
<feature type="active site" description="Nucleophile" evidence="1">
    <location>
        <position position="325"/>
    </location>
</feature>
<feature type="active site" evidence="1">
    <location>
        <position position="423"/>
    </location>
</feature>
<accession>Q8XWT0</accession>